<evidence type="ECO:0000255" key="1">
    <source>
        <dbReference type="HAMAP-Rule" id="MF_01189"/>
    </source>
</evidence>
<evidence type="ECO:0000269" key="2">
    <source>
    </source>
</evidence>
<evidence type="ECO:0000305" key="3"/>
<name>NEPI_SALTI</name>
<proteinExistence type="evidence at transcript level"/>
<reference key="1">
    <citation type="journal article" date="2003" name="J. Bacteriol.">
        <title>Comparative genomics of Salmonella enterica serovar Typhi strains Ty2 and CT18.</title>
        <authorList>
            <person name="Deng W."/>
            <person name="Liou S.-R."/>
            <person name="Plunkett G. III"/>
            <person name="Mayhew G.F."/>
            <person name="Rose D.J."/>
            <person name="Burland V."/>
            <person name="Kodoyianni V."/>
            <person name="Schwartz D.C."/>
            <person name="Blattner F.R."/>
        </authorList>
    </citation>
    <scope>NUCLEOTIDE SEQUENCE [LARGE SCALE GENOMIC DNA]</scope>
    <source>
        <strain>ATCC 700931 / Ty2</strain>
    </source>
</reference>
<reference key="2">
    <citation type="journal article" date="2001" name="Nature">
        <title>Complete genome sequence of a multiple drug resistant Salmonella enterica serovar Typhi CT18.</title>
        <authorList>
            <person name="Parkhill J."/>
            <person name="Dougan G."/>
            <person name="James K.D."/>
            <person name="Thomson N.R."/>
            <person name="Pickard D."/>
            <person name="Wain J."/>
            <person name="Churcher C.M."/>
            <person name="Mungall K.L."/>
            <person name="Bentley S.D."/>
            <person name="Holden M.T.G."/>
            <person name="Sebaihia M."/>
            <person name="Baker S."/>
            <person name="Basham D."/>
            <person name="Brooks K."/>
            <person name="Chillingworth T."/>
            <person name="Connerton P."/>
            <person name="Cronin A."/>
            <person name="Davis P."/>
            <person name="Davies R.M."/>
            <person name="Dowd L."/>
            <person name="White N."/>
            <person name="Farrar J."/>
            <person name="Feltwell T."/>
            <person name="Hamlin N."/>
            <person name="Haque A."/>
            <person name="Hien T.T."/>
            <person name="Holroyd S."/>
            <person name="Jagels K."/>
            <person name="Krogh A."/>
            <person name="Larsen T.S."/>
            <person name="Leather S."/>
            <person name="Moule S."/>
            <person name="O'Gaora P."/>
            <person name="Parry C."/>
            <person name="Quail M.A."/>
            <person name="Rutherford K.M."/>
            <person name="Simmonds M."/>
            <person name="Skelton J."/>
            <person name="Stevens K."/>
            <person name="Whitehead S."/>
            <person name="Barrell B.G."/>
        </authorList>
    </citation>
    <scope>NUCLEOTIDE SEQUENCE [LARGE SCALE GENOMIC DNA]</scope>
    <source>
        <strain>CT18</strain>
    </source>
</reference>
<reference key="3">
    <citation type="journal article" date="2002" name="Infect. Immun.">
        <title>Characterization of a novel intracellularly activated gene from Salmonella enterica serovar typhi.</title>
        <authorList>
            <person name="Basso H."/>
            <person name="Rharbaoui F."/>
            <person name="Staendner L.H."/>
            <person name="Medina E."/>
            <person name="Garcia-Del Portillo F."/>
            <person name="Guzman C.A."/>
        </authorList>
    </citation>
    <scope>NUCLEOTIDE SEQUENCE [GENOMIC DNA] OF 101-397</scope>
    <scope>INDUCTION</scope>
    <scope>ROLE IN VIRULENCE</scope>
    <source>
        <strain>ATCC 700931 / Ty2</strain>
    </source>
</reference>
<comment type="function">
    <text evidence="1 2">Involved in the efflux of purine ribonucleosides, such as inosine and guanosine (By similarity). Required for triggering apoptosis and bacterial survival inside macrophages (PubMed:12228264).</text>
</comment>
<comment type="catalytic activity">
    <reaction evidence="1">
        <text>inosine(in) + H(+)(out) = inosine(out) + H(+)(in)</text>
        <dbReference type="Rhea" id="RHEA:29211"/>
        <dbReference type="ChEBI" id="CHEBI:15378"/>
        <dbReference type="ChEBI" id="CHEBI:17596"/>
    </reaction>
    <physiologicalReaction direction="left-to-right" evidence="1">
        <dbReference type="Rhea" id="RHEA:29212"/>
    </physiologicalReaction>
</comment>
<comment type="catalytic activity">
    <reaction evidence="1">
        <text>guanosine(in) + H(+)(out) = guanosine(out) + H(+)(in)</text>
        <dbReference type="Rhea" id="RHEA:29583"/>
        <dbReference type="ChEBI" id="CHEBI:15378"/>
        <dbReference type="ChEBI" id="CHEBI:16750"/>
    </reaction>
    <physiologicalReaction direction="left-to-right" evidence="1">
        <dbReference type="Rhea" id="RHEA:29584"/>
    </physiologicalReaction>
</comment>
<comment type="subcellular location">
    <subcellularLocation>
        <location evidence="1">Cell inner membrane</location>
        <topology evidence="1">Multi-pass membrane protein</topology>
    </subcellularLocation>
</comment>
<comment type="induction">
    <text evidence="2">Induced upon invasion of the host cell.</text>
</comment>
<comment type="similarity">
    <text evidence="1 3">Belongs to the major facilitator superfamily. DHA1 family. NepI (TC 2.A.1.2.26) subfamily.</text>
</comment>
<feature type="chain" id="PRO_0000294115" description="Purine ribonucleoside efflux pump NepI">
    <location>
        <begin position="1"/>
        <end position="397"/>
    </location>
</feature>
<feature type="topological domain" description="Cytoplasmic" evidence="1">
    <location>
        <begin position="1"/>
        <end position="21"/>
    </location>
</feature>
<feature type="transmembrane region" description="Helical" evidence="1">
    <location>
        <begin position="22"/>
        <end position="42"/>
    </location>
</feature>
<feature type="topological domain" description="Periplasmic" evidence="1">
    <location>
        <begin position="43"/>
        <end position="54"/>
    </location>
</feature>
<feature type="transmembrane region" description="Helical" evidence="1">
    <location>
        <begin position="55"/>
        <end position="75"/>
    </location>
</feature>
<feature type="topological domain" description="Cytoplasmic" evidence="1">
    <location>
        <begin position="76"/>
        <end position="85"/>
    </location>
</feature>
<feature type="transmembrane region" description="Helical" evidence="1">
    <location>
        <begin position="86"/>
        <end position="106"/>
    </location>
</feature>
<feature type="topological domain" description="Periplasmic" evidence="1">
    <location>
        <position position="107"/>
    </location>
</feature>
<feature type="transmembrane region" description="Helical" evidence="1">
    <location>
        <begin position="108"/>
        <end position="128"/>
    </location>
</feature>
<feature type="topological domain" description="Cytoplasmic" evidence="1">
    <location>
        <begin position="129"/>
        <end position="147"/>
    </location>
</feature>
<feature type="transmembrane region" description="Helical" evidence="1">
    <location>
        <begin position="148"/>
        <end position="168"/>
    </location>
</feature>
<feature type="topological domain" description="Periplasmic" evidence="1">
    <location>
        <begin position="169"/>
        <end position="175"/>
    </location>
</feature>
<feature type="transmembrane region" description="Helical" evidence="1">
    <location>
        <begin position="176"/>
        <end position="196"/>
    </location>
</feature>
<feature type="topological domain" description="Cytoplasmic" evidence="1">
    <location>
        <begin position="197"/>
        <end position="215"/>
    </location>
</feature>
<feature type="transmembrane region" description="Helical" evidence="1">
    <location>
        <begin position="216"/>
        <end position="236"/>
    </location>
</feature>
<feature type="topological domain" description="Periplasmic" evidence="1">
    <location>
        <begin position="237"/>
        <end position="255"/>
    </location>
</feature>
<feature type="transmembrane region" description="Helical" evidence="1">
    <location>
        <begin position="256"/>
        <end position="276"/>
    </location>
</feature>
<feature type="topological domain" description="Cytoplasmic" evidence="1">
    <location>
        <begin position="277"/>
        <end position="281"/>
    </location>
</feature>
<feature type="transmembrane region" description="Helical" evidence="1">
    <location>
        <begin position="282"/>
        <end position="302"/>
    </location>
</feature>
<feature type="topological domain" description="Periplasmic" evidence="1">
    <location>
        <begin position="303"/>
        <end position="305"/>
    </location>
</feature>
<feature type="transmembrane region" description="Helical" evidence="1">
    <location>
        <begin position="306"/>
        <end position="326"/>
    </location>
</feature>
<feature type="topological domain" description="Cytoplasmic" evidence="1">
    <location>
        <begin position="327"/>
        <end position="343"/>
    </location>
</feature>
<feature type="transmembrane region" description="Helical" evidence="1">
    <location>
        <begin position="344"/>
        <end position="364"/>
    </location>
</feature>
<feature type="topological domain" description="Periplasmic" evidence="1">
    <location>
        <begin position="365"/>
        <end position="366"/>
    </location>
</feature>
<feature type="transmembrane region" description="Helical" evidence="1">
    <location>
        <begin position="367"/>
        <end position="387"/>
    </location>
</feature>
<feature type="topological domain" description="Cytoplasmic" evidence="1">
    <location>
        <begin position="388"/>
        <end position="397"/>
    </location>
</feature>
<feature type="sequence conflict" description="In Ref. 3; CAA06861." evidence="3" ref="3">
    <original>AA</original>
    <variation>GG</variation>
    <location>
        <begin position="309"/>
        <end position="310"/>
    </location>
</feature>
<sequence length="397" mass="41690">MNENIAEKFRADGVARPNWSAVFAVAFCVACLITVEFLPVSLLTPMAQDLGISEGVAGQSVTVTAFVAMFSSLFITQIIQATDRRYIVILFAVLLTASCLMVSFANSFTLLLLGRACLGLALGGFWAMSASLTMRLVPARTVPKALSVIFGAVSIALVIAAPLGSFLGGIIGWRNVFNAAAVMGVLCVIWVVKSLPSLPGEPSHQKQNMFSLLQRPGVMAGMIAIFMSFAGQFAFFTYIRPVYMNLAGFDVDGLTLVLLSFGIASFVGTSFSSYVLKRSVKLALAGAPLLLALSALTLIVWGSDKTVAAAIAIIWGLAFALVPVGWSTWITRSLADQAEKAGSIQVAVIQLANTCGAAVGGYALDNFGLLSPLALSGGLMLLTALVVAAKVRITPMS</sequence>
<keyword id="KW-0050">Antiport</keyword>
<keyword id="KW-0997">Cell inner membrane</keyword>
<keyword id="KW-1003">Cell membrane</keyword>
<keyword id="KW-0472">Membrane</keyword>
<keyword id="KW-0812">Transmembrane</keyword>
<keyword id="KW-1133">Transmembrane helix</keyword>
<keyword id="KW-0813">Transport</keyword>
<dbReference type="EMBL" id="AE014613">
    <property type="protein sequence ID" value="AAO71233.1"/>
    <property type="molecule type" value="Genomic_DNA"/>
</dbReference>
<dbReference type="EMBL" id="AL513382">
    <property type="protein sequence ID" value="CAD03218.1"/>
    <property type="molecule type" value="Genomic_DNA"/>
</dbReference>
<dbReference type="EMBL" id="AJ006101">
    <property type="protein sequence ID" value="CAA06861.1"/>
    <property type="molecule type" value="Genomic_DNA"/>
</dbReference>
<dbReference type="PIR" id="S70825">
    <property type="entry name" value="S70825"/>
</dbReference>
<dbReference type="RefSeq" id="NP_458159.1">
    <property type="nucleotide sequence ID" value="NC_003198.1"/>
</dbReference>
<dbReference type="RefSeq" id="WP_001004798.1">
    <property type="nucleotide sequence ID" value="NZ_WSUR01000001.1"/>
</dbReference>
<dbReference type="SMR" id="Q8XGS2"/>
<dbReference type="STRING" id="220341.gene:17587861"/>
<dbReference type="KEGG" id="stt:t3742"/>
<dbReference type="KEGG" id="sty:STY4008"/>
<dbReference type="PATRIC" id="fig|220341.7.peg.4092"/>
<dbReference type="eggNOG" id="COG2814">
    <property type="taxonomic scope" value="Bacteria"/>
</dbReference>
<dbReference type="HOGENOM" id="CLU_001265_61_1_6"/>
<dbReference type="OMA" id="HFAGSVY"/>
<dbReference type="OrthoDB" id="9812189at2"/>
<dbReference type="Proteomes" id="UP000000541">
    <property type="component" value="Chromosome"/>
</dbReference>
<dbReference type="Proteomes" id="UP000002670">
    <property type="component" value="Chromosome"/>
</dbReference>
<dbReference type="GO" id="GO:0005886">
    <property type="term" value="C:plasma membrane"/>
    <property type="evidence" value="ECO:0007669"/>
    <property type="project" value="UniProtKB-SubCell"/>
</dbReference>
<dbReference type="GO" id="GO:0015297">
    <property type="term" value="F:antiporter activity"/>
    <property type="evidence" value="ECO:0007669"/>
    <property type="project" value="UniProtKB-KW"/>
</dbReference>
<dbReference type="GO" id="GO:0015211">
    <property type="term" value="F:purine nucleoside transmembrane transporter activity"/>
    <property type="evidence" value="ECO:0007669"/>
    <property type="project" value="UniProtKB-UniRule"/>
</dbReference>
<dbReference type="CDD" id="cd17324">
    <property type="entry name" value="MFS_NepI_like"/>
    <property type="match status" value="1"/>
</dbReference>
<dbReference type="FunFam" id="1.20.1250.20:FF:000113">
    <property type="entry name" value="Purine ribonucleoside efflux pump NepI"/>
    <property type="match status" value="1"/>
</dbReference>
<dbReference type="Gene3D" id="1.20.1250.20">
    <property type="entry name" value="MFS general substrate transporter like domains"/>
    <property type="match status" value="1"/>
</dbReference>
<dbReference type="HAMAP" id="MF_01189">
    <property type="entry name" value="MFS_NepI"/>
    <property type="match status" value="1"/>
</dbReference>
<dbReference type="InterPro" id="IPR011701">
    <property type="entry name" value="MFS"/>
</dbReference>
<dbReference type="InterPro" id="IPR020846">
    <property type="entry name" value="MFS_dom"/>
</dbReference>
<dbReference type="InterPro" id="IPR050189">
    <property type="entry name" value="MFS_Efflux_Transporters"/>
</dbReference>
<dbReference type="InterPro" id="IPR023680">
    <property type="entry name" value="MFS_NepI"/>
</dbReference>
<dbReference type="InterPro" id="IPR036259">
    <property type="entry name" value="MFS_trans_sf"/>
</dbReference>
<dbReference type="NCBIfam" id="NF007578">
    <property type="entry name" value="PRK10213.1"/>
    <property type="match status" value="1"/>
</dbReference>
<dbReference type="PANTHER" id="PTHR43124">
    <property type="entry name" value="PURINE EFFLUX PUMP PBUE"/>
    <property type="match status" value="1"/>
</dbReference>
<dbReference type="PANTHER" id="PTHR43124:SF5">
    <property type="entry name" value="PURINE RIBONUCLEOSIDE EFFLUX PUMP NEPI"/>
    <property type="match status" value="1"/>
</dbReference>
<dbReference type="Pfam" id="PF07690">
    <property type="entry name" value="MFS_1"/>
    <property type="match status" value="1"/>
</dbReference>
<dbReference type="SUPFAM" id="SSF103473">
    <property type="entry name" value="MFS general substrate transporter"/>
    <property type="match status" value="1"/>
</dbReference>
<dbReference type="PROSITE" id="PS50850">
    <property type="entry name" value="MFS"/>
    <property type="match status" value="1"/>
</dbReference>
<organism>
    <name type="scientific">Salmonella typhi</name>
    <dbReference type="NCBI Taxonomy" id="90370"/>
    <lineage>
        <taxon>Bacteria</taxon>
        <taxon>Pseudomonadati</taxon>
        <taxon>Pseudomonadota</taxon>
        <taxon>Gammaproteobacteria</taxon>
        <taxon>Enterobacterales</taxon>
        <taxon>Enterobacteriaceae</taxon>
        <taxon>Salmonella</taxon>
    </lineage>
</organism>
<protein>
    <recommendedName>
        <fullName evidence="1">Purine ribonucleoside efflux pump NepI</fullName>
    </recommendedName>
</protein>
<accession>Q8XGS2</accession>
<accession>O70010</accession>
<accession>Q7ALZ4</accession>
<gene>
    <name evidence="1" type="primary">nepI</name>
    <name type="synonym">gaiA</name>
    <name type="ordered locus">STY4008</name>
    <name type="ordered locus">t3742</name>
</gene>